<feature type="chain" id="PRO_0000349012" description="Heme A synthase">
    <location>
        <begin position="1"/>
        <end position="358"/>
    </location>
</feature>
<feature type="transmembrane region" description="Helical" evidence="1">
    <location>
        <begin position="22"/>
        <end position="42"/>
    </location>
</feature>
<feature type="transmembrane region" description="Helical" evidence="1">
    <location>
        <begin position="107"/>
        <end position="127"/>
    </location>
</feature>
<feature type="transmembrane region" description="Helical" evidence="1">
    <location>
        <begin position="133"/>
        <end position="153"/>
    </location>
</feature>
<feature type="transmembrane region" description="Helical" evidence="1">
    <location>
        <begin position="172"/>
        <end position="192"/>
    </location>
</feature>
<feature type="transmembrane region" description="Helical" evidence="1">
    <location>
        <begin position="208"/>
        <end position="228"/>
    </location>
</feature>
<feature type="transmembrane region" description="Helical" evidence="1">
    <location>
        <begin position="269"/>
        <end position="289"/>
    </location>
</feature>
<feature type="transmembrane region" description="Helical" evidence="1">
    <location>
        <begin position="302"/>
        <end position="322"/>
    </location>
</feature>
<feature type="transmembrane region" description="Helical" evidence="1">
    <location>
        <begin position="324"/>
        <end position="344"/>
    </location>
</feature>
<feature type="binding site" description="axial binding residue" evidence="1">
    <location>
        <position position="271"/>
    </location>
    <ligand>
        <name>heme</name>
        <dbReference type="ChEBI" id="CHEBI:30413"/>
    </ligand>
    <ligandPart>
        <name>Fe</name>
        <dbReference type="ChEBI" id="CHEBI:18248"/>
    </ligandPart>
</feature>
<feature type="binding site" description="axial binding residue" evidence="1">
    <location>
        <position position="332"/>
    </location>
    <ligand>
        <name>heme</name>
        <dbReference type="ChEBI" id="CHEBI:30413"/>
    </ligand>
    <ligandPart>
        <name>Fe</name>
        <dbReference type="ChEBI" id="CHEBI:18248"/>
    </ligandPart>
</feature>
<name>CTAA_BARBK</name>
<dbReference type="EC" id="1.17.99.9" evidence="1"/>
<dbReference type="EMBL" id="CP000524">
    <property type="protein sequence ID" value="ABM45618.1"/>
    <property type="molecule type" value="Genomic_DNA"/>
</dbReference>
<dbReference type="RefSeq" id="WP_005766830.1">
    <property type="nucleotide sequence ID" value="NC_008783.1"/>
</dbReference>
<dbReference type="SMR" id="A1USH8"/>
<dbReference type="STRING" id="360095.BARBAKC583_0627"/>
<dbReference type="GeneID" id="4684410"/>
<dbReference type="KEGG" id="bbk:BARBAKC583_0627"/>
<dbReference type="PATRIC" id="fig|360095.6.peg.611"/>
<dbReference type="eggNOG" id="COG1612">
    <property type="taxonomic scope" value="Bacteria"/>
</dbReference>
<dbReference type="HOGENOM" id="CLU_017627_0_0_5"/>
<dbReference type="OrthoDB" id="9793156at2"/>
<dbReference type="UniPathway" id="UPA00269">
    <property type="reaction ID" value="UER00713"/>
</dbReference>
<dbReference type="Proteomes" id="UP000000643">
    <property type="component" value="Chromosome"/>
</dbReference>
<dbReference type="GO" id="GO:0005886">
    <property type="term" value="C:plasma membrane"/>
    <property type="evidence" value="ECO:0007669"/>
    <property type="project" value="UniProtKB-SubCell"/>
</dbReference>
<dbReference type="GO" id="GO:0046872">
    <property type="term" value="F:metal ion binding"/>
    <property type="evidence" value="ECO:0007669"/>
    <property type="project" value="UniProtKB-KW"/>
</dbReference>
<dbReference type="GO" id="GO:0016653">
    <property type="term" value="F:oxidoreductase activity, acting on NAD(P)H, heme protein as acceptor"/>
    <property type="evidence" value="ECO:0007669"/>
    <property type="project" value="InterPro"/>
</dbReference>
<dbReference type="GO" id="GO:0006784">
    <property type="term" value="P:heme A biosynthetic process"/>
    <property type="evidence" value="ECO:0007669"/>
    <property type="project" value="UniProtKB-UniRule"/>
</dbReference>
<dbReference type="HAMAP" id="MF_01665">
    <property type="entry name" value="HemeA_synth_type2"/>
    <property type="match status" value="1"/>
</dbReference>
<dbReference type="InterPro" id="IPR003780">
    <property type="entry name" value="COX15/CtaA_fam"/>
</dbReference>
<dbReference type="InterPro" id="IPR023754">
    <property type="entry name" value="HemeA_Synthase_type2"/>
</dbReference>
<dbReference type="PANTHER" id="PTHR23289">
    <property type="entry name" value="CYTOCHROME C OXIDASE ASSEMBLY PROTEIN COX15"/>
    <property type="match status" value="1"/>
</dbReference>
<dbReference type="PANTHER" id="PTHR23289:SF2">
    <property type="entry name" value="CYTOCHROME C OXIDASE ASSEMBLY PROTEIN COX15 HOMOLOG"/>
    <property type="match status" value="1"/>
</dbReference>
<dbReference type="Pfam" id="PF02628">
    <property type="entry name" value="COX15-CtaA"/>
    <property type="match status" value="1"/>
</dbReference>
<gene>
    <name evidence="1" type="primary">ctaA</name>
    <name type="ordered locus">BARBAKC583_0627</name>
</gene>
<organism>
    <name type="scientific">Bartonella bacilliformis (strain ATCC 35685 / KC583 / Herrer 020/F12,63)</name>
    <dbReference type="NCBI Taxonomy" id="360095"/>
    <lineage>
        <taxon>Bacteria</taxon>
        <taxon>Pseudomonadati</taxon>
        <taxon>Pseudomonadota</taxon>
        <taxon>Alphaproteobacteria</taxon>
        <taxon>Hyphomicrobiales</taxon>
        <taxon>Bartonellaceae</taxon>
        <taxon>Bartonella</taxon>
    </lineage>
</organism>
<protein>
    <recommendedName>
        <fullName evidence="1">Heme A synthase</fullName>
        <shortName evidence="1">HAS</shortName>
        <ecNumber evidence="1">1.17.99.9</ecNumber>
    </recommendedName>
    <alternativeName>
        <fullName evidence="1">Cytochrome aa3-controlling protein</fullName>
    </alternativeName>
</protein>
<comment type="function">
    <text evidence="1">Catalyzes the conversion of heme O to heme A by two successive hydroxylations of the methyl group at C8. The first hydroxylation forms heme I, the second hydroxylation results in an unstable dihydroxymethyl group, which spontaneously dehydrates, resulting in the formyl group of heme A.</text>
</comment>
<comment type="catalytic activity">
    <reaction evidence="1">
        <text>Fe(II)-heme o + 2 A + H2O = Fe(II)-heme a + 2 AH2</text>
        <dbReference type="Rhea" id="RHEA:63388"/>
        <dbReference type="ChEBI" id="CHEBI:13193"/>
        <dbReference type="ChEBI" id="CHEBI:15377"/>
        <dbReference type="ChEBI" id="CHEBI:17499"/>
        <dbReference type="ChEBI" id="CHEBI:60530"/>
        <dbReference type="ChEBI" id="CHEBI:61715"/>
        <dbReference type="EC" id="1.17.99.9"/>
    </reaction>
    <physiologicalReaction direction="left-to-right" evidence="1">
        <dbReference type="Rhea" id="RHEA:63389"/>
    </physiologicalReaction>
</comment>
<comment type="cofactor">
    <cofactor evidence="1">
        <name>heme b</name>
        <dbReference type="ChEBI" id="CHEBI:60344"/>
    </cofactor>
</comment>
<comment type="pathway">
    <text evidence="1">Porphyrin-containing compound metabolism; heme A biosynthesis; heme A from heme O: step 1/1.</text>
</comment>
<comment type="subunit">
    <text evidence="1">Interacts with CtaB.</text>
</comment>
<comment type="subcellular location">
    <subcellularLocation>
        <location evidence="1">Cell membrane</location>
        <topology evidence="1">Multi-pass membrane protein</topology>
    </subcellularLocation>
</comment>
<comment type="similarity">
    <text evidence="1">Belongs to the COX15/CtaA family. Type 2 subfamily.</text>
</comment>
<proteinExistence type="inferred from homology"/>
<accession>A1USH8</accession>
<reference key="1">
    <citation type="submission" date="2006-12" db="EMBL/GenBank/DDBJ databases">
        <authorList>
            <person name="Hendrix L."/>
            <person name="Mohamoud Y."/>
            <person name="Radune D."/>
            <person name="Shvartsbeyn A."/>
            <person name="Daugherty S."/>
            <person name="Dodson R."/>
            <person name="Durkin A.S."/>
            <person name="Harkins D."/>
            <person name="Huot H."/>
            <person name="Kothari S.P."/>
            <person name="Madupu R."/>
            <person name="Li J."/>
            <person name="Nelson W.C."/>
            <person name="Shrivastava S."/>
            <person name="Giglio M.G."/>
            <person name="Haft D."/>
            <person name="Selengut J."/>
            <person name="Fraser-Ligget C."/>
            <person name="Seshadri R."/>
        </authorList>
    </citation>
    <scope>NUCLEOTIDE SEQUENCE [LARGE SCALE GENOMIC DNA]</scope>
    <source>
        <strain>ATCC 35685 / KC583 / Herrer 020/F12,63</strain>
    </source>
</reference>
<keyword id="KW-1003">Cell membrane</keyword>
<keyword id="KW-0350">Heme biosynthesis</keyword>
<keyword id="KW-0408">Iron</keyword>
<keyword id="KW-0472">Membrane</keyword>
<keyword id="KW-0479">Metal-binding</keyword>
<keyword id="KW-0560">Oxidoreductase</keyword>
<keyword id="KW-0812">Transmembrane</keyword>
<keyword id="KW-1133">Transmembrane helix</keyword>
<evidence type="ECO:0000255" key="1">
    <source>
        <dbReference type="HAMAP-Rule" id="MF_01665"/>
    </source>
</evidence>
<sequence>MAIKKLNNITLTPLQKQNRKKIQVWLYTILLLCFAIVLVGGATRLTGSGLSITEWKPIHGVIPPISINQWQEEFLKYQQIAQYKVLNRDMTLNAFKVIFWWEWGHRVLGRFVGLVALLGLVLFWVTKRIEKNIFLQLLTVPILIAMQGIIGWWMVASGLGQSNLTSVSQYRLAIHLIAACLVIIFVTYLSRGLAEYSEKPANQGVQHFAGWLVFLILVEIYFGALVAGLHAGKVYNTWPLMDGQILPDGLLNYDPVWLNFFENPLTVQFVHRCFSYFLFITAVIHALYVQKSVPHSAHAHRAIFLCIMIVMQAFLGIITLLHEVPISLGLIHQGGALVVLCFSVMHWRATKGAYRVVE</sequence>